<comment type="function">
    <text evidence="1">Negative regulator of allantoin and glyoxylate utilization operons. Binds to the gcl promoter and to the allS-allA intergenic region (By similarity).</text>
</comment>
<protein>
    <recommendedName>
        <fullName>HTH-type transcriptional repressor AllR</fullName>
    </recommendedName>
    <alternativeName>
        <fullName>Negative regulator of allantoin and glyoxylate utilization operons</fullName>
    </alternativeName>
</protein>
<reference key="1">
    <citation type="journal article" date="2001" name="Nature">
        <title>Complete genome sequence of Salmonella enterica serovar Typhimurium LT2.</title>
        <authorList>
            <person name="McClelland M."/>
            <person name="Sanderson K.E."/>
            <person name="Spieth J."/>
            <person name="Clifton S.W."/>
            <person name="Latreille P."/>
            <person name="Courtney L."/>
            <person name="Porwollik S."/>
            <person name="Ali J."/>
            <person name="Dante M."/>
            <person name="Du F."/>
            <person name="Hou S."/>
            <person name="Layman D."/>
            <person name="Leonard S."/>
            <person name="Nguyen C."/>
            <person name="Scott K."/>
            <person name="Holmes A."/>
            <person name="Grewal N."/>
            <person name="Mulvaney E."/>
            <person name="Ryan E."/>
            <person name="Sun H."/>
            <person name="Florea L."/>
            <person name="Miller W."/>
            <person name="Stoneking T."/>
            <person name="Nhan M."/>
            <person name="Waterston R."/>
            <person name="Wilson R.K."/>
        </authorList>
    </citation>
    <scope>NUCLEOTIDE SEQUENCE [LARGE SCALE GENOMIC DNA]</scope>
    <source>
        <strain>LT2 / SGSC1412 / ATCC 700720</strain>
    </source>
</reference>
<evidence type="ECO:0000250" key="1"/>
<evidence type="ECO:0000255" key="2">
    <source>
        <dbReference type="PROSITE-ProRule" id="PRU00393"/>
    </source>
</evidence>
<evidence type="ECO:0000255" key="3">
    <source>
        <dbReference type="PROSITE-ProRule" id="PRU00394"/>
    </source>
</evidence>
<evidence type="ECO:0000256" key="4">
    <source>
        <dbReference type="SAM" id="MobiDB-lite"/>
    </source>
</evidence>
<keyword id="KW-0238">DNA-binding</keyword>
<keyword id="KW-1185">Reference proteome</keyword>
<keyword id="KW-0678">Repressor</keyword>
<keyword id="KW-0804">Transcription</keyword>
<keyword id="KW-0805">Transcription regulation</keyword>
<proteinExistence type="inferred from homology"/>
<accession>Q8ZR86</accession>
<feature type="chain" id="PRO_0000313705" description="HTH-type transcriptional repressor AllR">
    <location>
        <begin position="1"/>
        <end position="272"/>
    </location>
</feature>
<feature type="domain" description="HTH iclR-type" evidence="2">
    <location>
        <begin position="21"/>
        <end position="83"/>
    </location>
</feature>
<feature type="domain" description="IclR-ED" evidence="3">
    <location>
        <begin position="98"/>
        <end position="267"/>
    </location>
</feature>
<feature type="DNA-binding region" description="H-T-H motif" evidence="2">
    <location>
        <begin position="43"/>
        <end position="62"/>
    </location>
</feature>
<feature type="region of interest" description="Disordered" evidence="4">
    <location>
        <begin position="1"/>
        <end position="20"/>
    </location>
</feature>
<feature type="binding site" evidence="1">
    <location>
        <begin position="154"/>
        <end position="156"/>
    </location>
    <ligand>
        <name>glyoxylate</name>
        <dbReference type="ChEBI" id="CHEBI:36655"/>
    </ligand>
</feature>
<feature type="binding site" evidence="1">
    <location>
        <position position="207"/>
    </location>
    <ligand>
        <name>glyoxylate</name>
        <dbReference type="ChEBI" id="CHEBI:36655"/>
    </ligand>
</feature>
<feature type="binding site" evidence="1">
    <location>
        <position position="217"/>
    </location>
    <ligand>
        <name>glyoxylate</name>
        <dbReference type="ChEBI" id="CHEBI:36655"/>
    </ligand>
</feature>
<feature type="binding site" evidence="1">
    <location>
        <begin position="234"/>
        <end position="236"/>
    </location>
    <ligand>
        <name>glyoxylate</name>
        <dbReference type="ChEBI" id="CHEBI:36655"/>
    </ligand>
</feature>
<organism>
    <name type="scientific">Salmonella typhimurium (strain LT2 / SGSC1412 / ATCC 700720)</name>
    <dbReference type="NCBI Taxonomy" id="99287"/>
    <lineage>
        <taxon>Bacteria</taxon>
        <taxon>Pseudomonadati</taxon>
        <taxon>Pseudomonadota</taxon>
        <taxon>Gammaproteobacteria</taxon>
        <taxon>Enterobacterales</taxon>
        <taxon>Enterobacteriaceae</taxon>
        <taxon>Salmonella</taxon>
    </lineage>
</organism>
<gene>
    <name type="primary">allR</name>
    <name type="ordered locus">STM0516</name>
</gene>
<sequence>MTEVRRRGRPGQAEPTAQKGAQALERGIAILQYLERSGGSSSVSDISGSLDLPLSTTFRLLKVLQAADFVYQDSQLGWWHIGLGVFNVGSAYIHNRDVLSVAGPFMHRLMLLSGETVNVAIRNGNEAVLIGQKECKSMVRMCAPLGSRLPLHASGAGKALLYPLTEEELVGIVVNTGLRRFTPTTLVDLPILLKNLEQAREQGYTVDQEEHVVGLNCIASAIYDDAGSVVAAISISGPASRLTEDRFISQGELVRDTAKDISTALGLKPPVA</sequence>
<name>ALLR_SALTY</name>
<dbReference type="EMBL" id="AE006468">
    <property type="protein sequence ID" value="AAL19470.1"/>
    <property type="molecule type" value="Genomic_DNA"/>
</dbReference>
<dbReference type="RefSeq" id="NP_459511.1">
    <property type="nucleotide sequence ID" value="NC_003197.2"/>
</dbReference>
<dbReference type="RefSeq" id="WP_000141265.1">
    <property type="nucleotide sequence ID" value="NC_003197.2"/>
</dbReference>
<dbReference type="SMR" id="Q8ZR86"/>
<dbReference type="STRING" id="99287.STM0516"/>
<dbReference type="PaxDb" id="99287-STM0516"/>
<dbReference type="GeneID" id="1252036"/>
<dbReference type="KEGG" id="stm:STM0516"/>
<dbReference type="PATRIC" id="fig|99287.12.peg.550"/>
<dbReference type="HOGENOM" id="CLU_062618_7_1_6"/>
<dbReference type="OMA" id="EHMDGLR"/>
<dbReference type="PhylomeDB" id="Q8ZR86"/>
<dbReference type="BioCyc" id="SENT99287:STM0516-MONOMER"/>
<dbReference type="Proteomes" id="UP000001014">
    <property type="component" value="Chromosome"/>
</dbReference>
<dbReference type="GO" id="GO:0003677">
    <property type="term" value="F:DNA binding"/>
    <property type="evidence" value="ECO:0000318"/>
    <property type="project" value="GO_Central"/>
</dbReference>
<dbReference type="GO" id="GO:0003700">
    <property type="term" value="F:DNA-binding transcription factor activity"/>
    <property type="evidence" value="ECO:0000318"/>
    <property type="project" value="GO_Central"/>
</dbReference>
<dbReference type="GO" id="GO:0045892">
    <property type="term" value="P:negative regulation of DNA-templated transcription"/>
    <property type="evidence" value="ECO:0000318"/>
    <property type="project" value="GO_Central"/>
</dbReference>
<dbReference type="FunFam" id="3.30.450.40:FF:000017">
    <property type="entry name" value="HTH-type transcriptional repressor AllR"/>
    <property type="match status" value="1"/>
</dbReference>
<dbReference type="Gene3D" id="3.30.450.40">
    <property type="match status" value="1"/>
</dbReference>
<dbReference type="Gene3D" id="1.10.10.10">
    <property type="entry name" value="Winged helix-like DNA-binding domain superfamily/Winged helix DNA-binding domain"/>
    <property type="match status" value="1"/>
</dbReference>
<dbReference type="InterPro" id="IPR029016">
    <property type="entry name" value="GAF-like_dom_sf"/>
</dbReference>
<dbReference type="InterPro" id="IPR050707">
    <property type="entry name" value="HTH_MetabolicPath_Reg"/>
</dbReference>
<dbReference type="InterPro" id="IPR014757">
    <property type="entry name" value="Tscrpt_reg_IclR_C"/>
</dbReference>
<dbReference type="InterPro" id="IPR005471">
    <property type="entry name" value="Tscrpt_reg_IclR_N"/>
</dbReference>
<dbReference type="InterPro" id="IPR036388">
    <property type="entry name" value="WH-like_DNA-bd_sf"/>
</dbReference>
<dbReference type="InterPro" id="IPR036390">
    <property type="entry name" value="WH_DNA-bd_sf"/>
</dbReference>
<dbReference type="NCBIfam" id="NF007548">
    <property type="entry name" value="PRK10163.1"/>
    <property type="match status" value="1"/>
</dbReference>
<dbReference type="PANTHER" id="PTHR30136">
    <property type="entry name" value="HELIX-TURN-HELIX TRANSCRIPTIONAL REGULATOR, ICLR FAMILY"/>
    <property type="match status" value="1"/>
</dbReference>
<dbReference type="PANTHER" id="PTHR30136:SF24">
    <property type="entry name" value="HTH-TYPE TRANSCRIPTIONAL REPRESSOR ALLR"/>
    <property type="match status" value="1"/>
</dbReference>
<dbReference type="Pfam" id="PF09339">
    <property type="entry name" value="HTH_IclR"/>
    <property type="match status" value="1"/>
</dbReference>
<dbReference type="Pfam" id="PF01614">
    <property type="entry name" value="IclR_C"/>
    <property type="match status" value="1"/>
</dbReference>
<dbReference type="SMART" id="SM00346">
    <property type="entry name" value="HTH_ICLR"/>
    <property type="match status" value="1"/>
</dbReference>
<dbReference type="SUPFAM" id="SSF55781">
    <property type="entry name" value="GAF domain-like"/>
    <property type="match status" value="1"/>
</dbReference>
<dbReference type="SUPFAM" id="SSF46785">
    <property type="entry name" value="Winged helix' DNA-binding domain"/>
    <property type="match status" value="1"/>
</dbReference>
<dbReference type="PROSITE" id="PS51077">
    <property type="entry name" value="HTH_ICLR"/>
    <property type="match status" value="1"/>
</dbReference>
<dbReference type="PROSITE" id="PS51078">
    <property type="entry name" value="ICLR_ED"/>
    <property type="match status" value="1"/>
</dbReference>